<dbReference type="EC" id="6.3.5.-" evidence="1"/>
<dbReference type="EMBL" id="CP000912">
    <property type="protein sequence ID" value="ABY39580.1"/>
    <property type="molecule type" value="Genomic_DNA"/>
</dbReference>
<dbReference type="RefSeq" id="WP_002966038.1">
    <property type="nucleotide sequence ID" value="NC_010167.1"/>
</dbReference>
<dbReference type="SMR" id="A9WYR4"/>
<dbReference type="GeneID" id="97535281"/>
<dbReference type="KEGG" id="bmt:BSUIS_B0592"/>
<dbReference type="HOGENOM" id="CLU_105899_2_0_5"/>
<dbReference type="Proteomes" id="UP000008545">
    <property type="component" value="Chromosome II"/>
</dbReference>
<dbReference type="GO" id="GO:0050566">
    <property type="term" value="F:asparaginyl-tRNA synthase (glutamine-hydrolyzing) activity"/>
    <property type="evidence" value="ECO:0007669"/>
    <property type="project" value="RHEA"/>
</dbReference>
<dbReference type="GO" id="GO:0005524">
    <property type="term" value="F:ATP binding"/>
    <property type="evidence" value="ECO:0007669"/>
    <property type="project" value="UniProtKB-KW"/>
</dbReference>
<dbReference type="GO" id="GO:0050567">
    <property type="term" value="F:glutaminyl-tRNA synthase (glutamine-hydrolyzing) activity"/>
    <property type="evidence" value="ECO:0007669"/>
    <property type="project" value="UniProtKB-UniRule"/>
</dbReference>
<dbReference type="GO" id="GO:0070681">
    <property type="term" value="P:glutaminyl-tRNAGln biosynthesis via transamidation"/>
    <property type="evidence" value="ECO:0007669"/>
    <property type="project" value="TreeGrafter"/>
</dbReference>
<dbReference type="GO" id="GO:0006450">
    <property type="term" value="P:regulation of translational fidelity"/>
    <property type="evidence" value="ECO:0007669"/>
    <property type="project" value="InterPro"/>
</dbReference>
<dbReference type="GO" id="GO:0006412">
    <property type="term" value="P:translation"/>
    <property type="evidence" value="ECO:0007669"/>
    <property type="project" value="UniProtKB-UniRule"/>
</dbReference>
<dbReference type="Gene3D" id="1.10.20.60">
    <property type="entry name" value="Glu-tRNAGln amidotransferase C subunit, N-terminal domain"/>
    <property type="match status" value="1"/>
</dbReference>
<dbReference type="HAMAP" id="MF_00122">
    <property type="entry name" value="GatC"/>
    <property type="match status" value="1"/>
</dbReference>
<dbReference type="InterPro" id="IPR036113">
    <property type="entry name" value="Asp/Glu-ADT_sf_sub_c"/>
</dbReference>
<dbReference type="InterPro" id="IPR003837">
    <property type="entry name" value="GatC"/>
</dbReference>
<dbReference type="NCBIfam" id="TIGR00135">
    <property type="entry name" value="gatC"/>
    <property type="match status" value="1"/>
</dbReference>
<dbReference type="PANTHER" id="PTHR15004">
    <property type="entry name" value="GLUTAMYL-TRNA(GLN) AMIDOTRANSFERASE SUBUNIT C, MITOCHONDRIAL"/>
    <property type="match status" value="1"/>
</dbReference>
<dbReference type="PANTHER" id="PTHR15004:SF0">
    <property type="entry name" value="GLUTAMYL-TRNA(GLN) AMIDOTRANSFERASE SUBUNIT C, MITOCHONDRIAL"/>
    <property type="match status" value="1"/>
</dbReference>
<dbReference type="Pfam" id="PF02686">
    <property type="entry name" value="GatC"/>
    <property type="match status" value="1"/>
</dbReference>
<dbReference type="SUPFAM" id="SSF141000">
    <property type="entry name" value="Glu-tRNAGln amidotransferase C subunit"/>
    <property type="match status" value="1"/>
</dbReference>
<keyword id="KW-0067">ATP-binding</keyword>
<keyword id="KW-0436">Ligase</keyword>
<keyword id="KW-0547">Nucleotide-binding</keyword>
<keyword id="KW-0648">Protein biosynthesis</keyword>
<organism>
    <name type="scientific">Brucella suis (strain ATCC 23445 / NCTC 10510)</name>
    <dbReference type="NCBI Taxonomy" id="470137"/>
    <lineage>
        <taxon>Bacteria</taxon>
        <taxon>Pseudomonadati</taxon>
        <taxon>Pseudomonadota</taxon>
        <taxon>Alphaproteobacteria</taxon>
        <taxon>Hyphomicrobiales</taxon>
        <taxon>Brucellaceae</taxon>
        <taxon>Brucella/Ochrobactrum group</taxon>
        <taxon>Brucella</taxon>
    </lineage>
</organism>
<comment type="function">
    <text evidence="1">Allows the formation of correctly charged Asn-tRNA(Asn) or Gln-tRNA(Gln) through the transamidation of misacylated Asp-tRNA(Asn) or Glu-tRNA(Gln) in organisms which lack either or both of asparaginyl-tRNA or glutaminyl-tRNA synthetases. The reaction takes place in the presence of glutamine and ATP through an activated phospho-Asp-tRNA(Asn) or phospho-Glu-tRNA(Gln).</text>
</comment>
<comment type="catalytic activity">
    <reaction evidence="1">
        <text>L-glutamyl-tRNA(Gln) + L-glutamine + ATP + H2O = L-glutaminyl-tRNA(Gln) + L-glutamate + ADP + phosphate + H(+)</text>
        <dbReference type="Rhea" id="RHEA:17521"/>
        <dbReference type="Rhea" id="RHEA-COMP:9681"/>
        <dbReference type="Rhea" id="RHEA-COMP:9684"/>
        <dbReference type="ChEBI" id="CHEBI:15377"/>
        <dbReference type="ChEBI" id="CHEBI:15378"/>
        <dbReference type="ChEBI" id="CHEBI:29985"/>
        <dbReference type="ChEBI" id="CHEBI:30616"/>
        <dbReference type="ChEBI" id="CHEBI:43474"/>
        <dbReference type="ChEBI" id="CHEBI:58359"/>
        <dbReference type="ChEBI" id="CHEBI:78520"/>
        <dbReference type="ChEBI" id="CHEBI:78521"/>
        <dbReference type="ChEBI" id="CHEBI:456216"/>
    </reaction>
</comment>
<comment type="catalytic activity">
    <reaction evidence="1">
        <text>L-aspartyl-tRNA(Asn) + L-glutamine + ATP + H2O = L-asparaginyl-tRNA(Asn) + L-glutamate + ADP + phosphate + 2 H(+)</text>
        <dbReference type="Rhea" id="RHEA:14513"/>
        <dbReference type="Rhea" id="RHEA-COMP:9674"/>
        <dbReference type="Rhea" id="RHEA-COMP:9677"/>
        <dbReference type="ChEBI" id="CHEBI:15377"/>
        <dbReference type="ChEBI" id="CHEBI:15378"/>
        <dbReference type="ChEBI" id="CHEBI:29985"/>
        <dbReference type="ChEBI" id="CHEBI:30616"/>
        <dbReference type="ChEBI" id="CHEBI:43474"/>
        <dbReference type="ChEBI" id="CHEBI:58359"/>
        <dbReference type="ChEBI" id="CHEBI:78515"/>
        <dbReference type="ChEBI" id="CHEBI:78516"/>
        <dbReference type="ChEBI" id="CHEBI:456216"/>
    </reaction>
</comment>
<comment type="subunit">
    <text evidence="1">Heterotrimer of A, B and C subunits.</text>
</comment>
<comment type="similarity">
    <text evidence="1">Belongs to the GatC family.</text>
</comment>
<name>GATC_BRUSI</name>
<protein>
    <recommendedName>
        <fullName evidence="1">Aspartyl/glutamyl-tRNA(Asn/Gln) amidotransferase subunit C</fullName>
        <shortName evidence="1">Asp/Glu-ADT subunit C</shortName>
        <ecNumber evidence="1">6.3.5.-</ecNumber>
    </recommendedName>
</protein>
<accession>A9WYR4</accession>
<feature type="chain" id="PRO_1000076177" description="Aspartyl/glutamyl-tRNA(Asn/Gln) amidotransferase subunit C">
    <location>
        <begin position="1"/>
        <end position="95"/>
    </location>
</feature>
<evidence type="ECO:0000255" key="1">
    <source>
        <dbReference type="HAMAP-Rule" id="MF_00122"/>
    </source>
</evidence>
<sequence>MSVDISTVKRVAHLARIAVSEDDAERMTGELNAILGFVEQLNEVDVEGIEPMTSVTPMKMRMREDKVTDGGIAAAVVANAPVTEDNFFVVPKVVE</sequence>
<reference key="1">
    <citation type="submission" date="2007-12" db="EMBL/GenBank/DDBJ databases">
        <title>Brucella suis ATCC 23445 whole genome shotgun sequencing project.</title>
        <authorList>
            <person name="Setubal J.C."/>
            <person name="Bowns C."/>
            <person name="Boyle S."/>
            <person name="Crasta O.R."/>
            <person name="Czar M.J."/>
            <person name="Dharmanolla C."/>
            <person name="Gillespie J.J."/>
            <person name="Kenyon R.W."/>
            <person name="Lu J."/>
            <person name="Mane S."/>
            <person name="Mohapatra S."/>
            <person name="Nagrani S."/>
            <person name="Purkayastha A."/>
            <person name="Rajasimha H.K."/>
            <person name="Shallom J.M."/>
            <person name="Shallom S."/>
            <person name="Shukla M."/>
            <person name="Snyder E.E."/>
            <person name="Sobral B.W."/>
            <person name="Wattam A.R."/>
            <person name="Will R."/>
            <person name="Williams K."/>
            <person name="Yoo H."/>
            <person name="Bruce D."/>
            <person name="Detter C."/>
            <person name="Munk C."/>
            <person name="Brettin T.S."/>
        </authorList>
    </citation>
    <scope>NUCLEOTIDE SEQUENCE [LARGE SCALE GENOMIC DNA]</scope>
    <source>
        <strain>ATCC 23445 / NCTC 10510</strain>
    </source>
</reference>
<gene>
    <name evidence="1" type="primary">gatC</name>
    <name type="ordered locus">BSUIS_B0592</name>
</gene>
<proteinExistence type="inferred from homology"/>